<protein>
    <recommendedName>
        <fullName evidence="2">Elongation factor Tu</fullName>
        <shortName evidence="2">EF-Tu</shortName>
        <ecNumber evidence="2">3.6.5.3</ecNumber>
    </recommendedName>
</protein>
<keyword id="KW-0963">Cytoplasm</keyword>
<keyword id="KW-0251">Elongation factor</keyword>
<keyword id="KW-0342">GTP-binding</keyword>
<keyword id="KW-0378">Hydrolase</keyword>
<keyword id="KW-0460">Magnesium</keyword>
<keyword id="KW-0479">Metal-binding</keyword>
<keyword id="KW-0547">Nucleotide-binding</keyword>
<keyword id="KW-0648">Protein biosynthesis</keyword>
<keyword id="KW-1185">Reference proteome</keyword>
<reference key="1">
    <citation type="journal article" date="2007" name="J. Bacteriol.">
        <title>Genome sequence of Avery's virulent serotype 2 strain D39 of Streptococcus pneumoniae and comparison with that of unencapsulated laboratory strain R6.</title>
        <authorList>
            <person name="Lanie J.A."/>
            <person name="Ng W.-L."/>
            <person name="Kazmierczak K.M."/>
            <person name="Andrzejewski T.M."/>
            <person name="Davidsen T.M."/>
            <person name="Wayne K.J."/>
            <person name="Tettelin H."/>
            <person name="Glass J.I."/>
            <person name="Winkler M.E."/>
        </authorList>
    </citation>
    <scope>NUCLEOTIDE SEQUENCE [LARGE SCALE GENOMIC DNA]</scope>
    <source>
        <strain>D39 / NCTC 7466</strain>
    </source>
</reference>
<proteinExistence type="inferred from homology"/>
<dbReference type="EC" id="3.6.5.3" evidence="2"/>
<dbReference type="EMBL" id="CP000410">
    <property type="protein sequence ID" value="ABJ53652.1"/>
    <property type="molecule type" value="Genomic_DNA"/>
</dbReference>
<dbReference type="RefSeq" id="WP_001040724.1">
    <property type="nucleotide sequence ID" value="NZ_JAMLJR010000008.1"/>
</dbReference>
<dbReference type="SMR" id="Q04N79"/>
<dbReference type="PaxDb" id="373153-SPD_1318"/>
<dbReference type="GeneID" id="45653269"/>
<dbReference type="KEGG" id="spd:SPD_1318"/>
<dbReference type="eggNOG" id="COG0050">
    <property type="taxonomic scope" value="Bacteria"/>
</dbReference>
<dbReference type="HOGENOM" id="CLU_007265_0_1_9"/>
<dbReference type="BioCyc" id="SPNE373153:G1G6V-1420-MONOMER"/>
<dbReference type="Proteomes" id="UP000001452">
    <property type="component" value="Chromosome"/>
</dbReference>
<dbReference type="GO" id="GO:0005829">
    <property type="term" value="C:cytosol"/>
    <property type="evidence" value="ECO:0007669"/>
    <property type="project" value="TreeGrafter"/>
</dbReference>
<dbReference type="GO" id="GO:0005525">
    <property type="term" value="F:GTP binding"/>
    <property type="evidence" value="ECO:0007669"/>
    <property type="project" value="UniProtKB-UniRule"/>
</dbReference>
<dbReference type="GO" id="GO:0003924">
    <property type="term" value="F:GTPase activity"/>
    <property type="evidence" value="ECO:0007669"/>
    <property type="project" value="InterPro"/>
</dbReference>
<dbReference type="GO" id="GO:0003746">
    <property type="term" value="F:translation elongation factor activity"/>
    <property type="evidence" value="ECO:0007669"/>
    <property type="project" value="UniProtKB-UniRule"/>
</dbReference>
<dbReference type="CDD" id="cd01884">
    <property type="entry name" value="EF_Tu"/>
    <property type="match status" value="1"/>
</dbReference>
<dbReference type="CDD" id="cd03697">
    <property type="entry name" value="EFTU_II"/>
    <property type="match status" value="1"/>
</dbReference>
<dbReference type="CDD" id="cd03707">
    <property type="entry name" value="EFTU_III"/>
    <property type="match status" value="1"/>
</dbReference>
<dbReference type="FunFam" id="2.40.30.10:FF:000001">
    <property type="entry name" value="Elongation factor Tu"/>
    <property type="match status" value="1"/>
</dbReference>
<dbReference type="FunFam" id="3.40.50.300:FF:000003">
    <property type="entry name" value="Elongation factor Tu"/>
    <property type="match status" value="1"/>
</dbReference>
<dbReference type="Gene3D" id="3.40.50.300">
    <property type="entry name" value="P-loop containing nucleotide triphosphate hydrolases"/>
    <property type="match status" value="1"/>
</dbReference>
<dbReference type="Gene3D" id="2.40.30.10">
    <property type="entry name" value="Translation factors"/>
    <property type="match status" value="2"/>
</dbReference>
<dbReference type="HAMAP" id="MF_00118_B">
    <property type="entry name" value="EF_Tu_B"/>
    <property type="match status" value="1"/>
</dbReference>
<dbReference type="InterPro" id="IPR041709">
    <property type="entry name" value="EF-Tu_GTP-bd"/>
</dbReference>
<dbReference type="InterPro" id="IPR050055">
    <property type="entry name" value="EF-Tu_GTPase"/>
</dbReference>
<dbReference type="InterPro" id="IPR004161">
    <property type="entry name" value="EFTu-like_2"/>
</dbReference>
<dbReference type="InterPro" id="IPR033720">
    <property type="entry name" value="EFTU_2"/>
</dbReference>
<dbReference type="InterPro" id="IPR031157">
    <property type="entry name" value="G_TR_CS"/>
</dbReference>
<dbReference type="InterPro" id="IPR027417">
    <property type="entry name" value="P-loop_NTPase"/>
</dbReference>
<dbReference type="InterPro" id="IPR005225">
    <property type="entry name" value="Small_GTP-bd"/>
</dbReference>
<dbReference type="InterPro" id="IPR000795">
    <property type="entry name" value="T_Tr_GTP-bd_dom"/>
</dbReference>
<dbReference type="InterPro" id="IPR009000">
    <property type="entry name" value="Transl_B-barrel_sf"/>
</dbReference>
<dbReference type="InterPro" id="IPR009001">
    <property type="entry name" value="Transl_elong_EF1A/Init_IF2_C"/>
</dbReference>
<dbReference type="InterPro" id="IPR004541">
    <property type="entry name" value="Transl_elong_EFTu/EF1A_bac/org"/>
</dbReference>
<dbReference type="InterPro" id="IPR004160">
    <property type="entry name" value="Transl_elong_EFTu/EF1A_C"/>
</dbReference>
<dbReference type="NCBIfam" id="TIGR00485">
    <property type="entry name" value="EF-Tu"/>
    <property type="match status" value="1"/>
</dbReference>
<dbReference type="NCBIfam" id="NF000766">
    <property type="entry name" value="PRK00049.1"/>
    <property type="match status" value="1"/>
</dbReference>
<dbReference type="NCBIfam" id="NF009372">
    <property type="entry name" value="PRK12735.1"/>
    <property type="match status" value="1"/>
</dbReference>
<dbReference type="NCBIfam" id="NF009373">
    <property type="entry name" value="PRK12736.1"/>
    <property type="match status" value="1"/>
</dbReference>
<dbReference type="NCBIfam" id="TIGR00231">
    <property type="entry name" value="small_GTP"/>
    <property type="match status" value="1"/>
</dbReference>
<dbReference type="PANTHER" id="PTHR43721:SF22">
    <property type="entry name" value="ELONGATION FACTOR TU, MITOCHONDRIAL"/>
    <property type="match status" value="1"/>
</dbReference>
<dbReference type="PANTHER" id="PTHR43721">
    <property type="entry name" value="ELONGATION FACTOR TU-RELATED"/>
    <property type="match status" value="1"/>
</dbReference>
<dbReference type="Pfam" id="PF00009">
    <property type="entry name" value="GTP_EFTU"/>
    <property type="match status" value="1"/>
</dbReference>
<dbReference type="Pfam" id="PF03144">
    <property type="entry name" value="GTP_EFTU_D2"/>
    <property type="match status" value="1"/>
</dbReference>
<dbReference type="Pfam" id="PF03143">
    <property type="entry name" value="GTP_EFTU_D3"/>
    <property type="match status" value="1"/>
</dbReference>
<dbReference type="PRINTS" id="PR00315">
    <property type="entry name" value="ELONGATNFCT"/>
</dbReference>
<dbReference type="SUPFAM" id="SSF50465">
    <property type="entry name" value="EF-Tu/eEF-1alpha/eIF2-gamma C-terminal domain"/>
    <property type="match status" value="1"/>
</dbReference>
<dbReference type="SUPFAM" id="SSF52540">
    <property type="entry name" value="P-loop containing nucleoside triphosphate hydrolases"/>
    <property type="match status" value="1"/>
</dbReference>
<dbReference type="SUPFAM" id="SSF50447">
    <property type="entry name" value="Translation proteins"/>
    <property type="match status" value="1"/>
</dbReference>
<dbReference type="PROSITE" id="PS00301">
    <property type="entry name" value="G_TR_1"/>
    <property type="match status" value="1"/>
</dbReference>
<dbReference type="PROSITE" id="PS51722">
    <property type="entry name" value="G_TR_2"/>
    <property type="match status" value="1"/>
</dbReference>
<comment type="function">
    <text evidence="2">GTP hydrolase that promotes the GTP-dependent binding of aminoacyl-tRNA to the A-site of ribosomes during protein biosynthesis.</text>
</comment>
<comment type="catalytic activity">
    <reaction evidence="2">
        <text>GTP + H2O = GDP + phosphate + H(+)</text>
        <dbReference type="Rhea" id="RHEA:19669"/>
        <dbReference type="ChEBI" id="CHEBI:15377"/>
        <dbReference type="ChEBI" id="CHEBI:15378"/>
        <dbReference type="ChEBI" id="CHEBI:37565"/>
        <dbReference type="ChEBI" id="CHEBI:43474"/>
        <dbReference type="ChEBI" id="CHEBI:58189"/>
        <dbReference type="EC" id="3.6.5.3"/>
    </reaction>
    <physiologicalReaction direction="left-to-right" evidence="2">
        <dbReference type="Rhea" id="RHEA:19670"/>
    </physiologicalReaction>
</comment>
<comment type="subunit">
    <text evidence="2">Monomer.</text>
</comment>
<comment type="subcellular location">
    <subcellularLocation>
        <location evidence="2">Cytoplasm</location>
    </subcellularLocation>
</comment>
<comment type="similarity">
    <text evidence="2">Belongs to the TRAFAC class translation factor GTPase superfamily. Classic translation factor GTPase family. EF-Tu/EF-1A subfamily.</text>
</comment>
<feature type="chain" id="PRO_1000015758" description="Elongation factor Tu">
    <location>
        <begin position="1"/>
        <end position="398"/>
    </location>
</feature>
<feature type="domain" description="tr-type G">
    <location>
        <begin position="10"/>
        <end position="207"/>
    </location>
</feature>
<feature type="region of interest" description="G1" evidence="1">
    <location>
        <begin position="19"/>
        <end position="26"/>
    </location>
</feature>
<feature type="region of interest" description="G2" evidence="1">
    <location>
        <begin position="63"/>
        <end position="67"/>
    </location>
</feature>
<feature type="region of interest" description="G3" evidence="1">
    <location>
        <begin position="84"/>
        <end position="87"/>
    </location>
</feature>
<feature type="region of interest" description="G4" evidence="1">
    <location>
        <begin position="139"/>
        <end position="142"/>
    </location>
</feature>
<feature type="region of interest" description="G5" evidence="1">
    <location>
        <begin position="177"/>
        <end position="179"/>
    </location>
</feature>
<feature type="binding site" evidence="2">
    <location>
        <begin position="19"/>
        <end position="26"/>
    </location>
    <ligand>
        <name>GTP</name>
        <dbReference type="ChEBI" id="CHEBI:37565"/>
    </ligand>
</feature>
<feature type="binding site" evidence="2">
    <location>
        <position position="26"/>
    </location>
    <ligand>
        <name>Mg(2+)</name>
        <dbReference type="ChEBI" id="CHEBI:18420"/>
    </ligand>
</feature>
<feature type="binding site" evidence="2">
    <location>
        <begin position="84"/>
        <end position="88"/>
    </location>
    <ligand>
        <name>GTP</name>
        <dbReference type="ChEBI" id="CHEBI:37565"/>
    </ligand>
</feature>
<feature type="binding site" evidence="2">
    <location>
        <begin position="139"/>
        <end position="142"/>
    </location>
    <ligand>
        <name>GTP</name>
        <dbReference type="ChEBI" id="CHEBI:37565"/>
    </ligand>
</feature>
<organism>
    <name type="scientific">Streptococcus pneumoniae serotype 2 (strain D39 / NCTC 7466)</name>
    <dbReference type="NCBI Taxonomy" id="373153"/>
    <lineage>
        <taxon>Bacteria</taxon>
        <taxon>Bacillati</taxon>
        <taxon>Bacillota</taxon>
        <taxon>Bacilli</taxon>
        <taxon>Lactobacillales</taxon>
        <taxon>Streptococcaceae</taxon>
        <taxon>Streptococcus</taxon>
    </lineage>
</organism>
<name>EFTU_STRP2</name>
<accession>Q04N79</accession>
<evidence type="ECO:0000250" key="1"/>
<evidence type="ECO:0000255" key="2">
    <source>
        <dbReference type="HAMAP-Rule" id="MF_00118"/>
    </source>
</evidence>
<sequence>MAKEKYDRSKPHVNIGTIGHVDHGKTTLTAAITTVLARRLPSSVNQPKDYASIDAAPEERERGITINTAHVEYETEKRHYAHIDAPGHADYVKNMITGAAQMDGAILVVASTDGPMPQTREHILLSRQVGVKHLIVFMNKVDLVDDEELLELVEMEIRDLLSEYDFPGDDLPVIQGSALKALEGDSKYEDIVMELMNTVDEYIPEPERDTDKPLLLPVEDVFSITGRGTVASGRIDRGIVKVNDEIEIVGIKEETQKAVVTGVEMFRKQLDEGLAGDNVGVLLRGVQRDEIERGQVIAKPGSINPHTKFKGEVYILTKEEGGRHTPFFNNYRPQFYFRTTDVTGSIELPAGTEMVMPGDNVTIDVELIHPIAVEQGTTFSIREGGRTVGSGMVTEIEA</sequence>
<gene>
    <name evidence="2" type="primary">tuf</name>
    <name type="ordered locus">SPD_1318</name>
</gene>